<gene>
    <name type="ordered locus">KPN78578_08530</name>
    <name type="ORF">KPN_00878</name>
</gene>
<comment type="subcellular location">
    <subcellularLocation>
        <location evidence="1">Cell membrane</location>
        <topology evidence="1">Multi-pass membrane protein</topology>
    </subcellularLocation>
</comment>
<comment type="similarity">
    <text evidence="1">Belongs to the AAE transporter (TC 2.A.81) family. YbjL subfamily.</text>
</comment>
<comment type="sequence caution" evidence="2">
    <conflict type="erroneous initiation">
        <sequence resource="EMBL-CDS" id="ABR76314"/>
    </conflict>
</comment>
<protein>
    <recommendedName>
        <fullName evidence="1">Putative transport protein KPN78578_08530</fullName>
    </recommendedName>
</protein>
<accession>A6T6U3</accession>
<evidence type="ECO:0000255" key="1">
    <source>
        <dbReference type="HAMAP-Rule" id="MF_01015"/>
    </source>
</evidence>
<evidence type="ECO:0000305" key="2"/>
<keyword id="KW-1003">Cell membrane</keyword>
<keyword id="KW-0472">Membrane</keyword>
<keyword id="KW-0677">Repeat</keyword>
<keyword id="KW-0812">Transmembrane</keyword>
<keyword id="KW-1133">Transmembrane helix</keyword>
<keyword id="KW-0813">Transport</keyword>
<name>Y853_KLEP7</name>
<sequence length="561" mass="60384">MNINVADLLNGNYILLLFVVLALGLCLGKLRLGSVQLGNSIGVLVVSLLLGQQHFAINTDALNLGFMLFIFCVGVEAGPNFFSIFFRDGKNYLMLALVMVGSAMLIAMVLGKVFGWDIGLTAGMLAGAMTSTPVLVGAGDTLRHFGLPSDQLAQSLDHLSLGYALTYLVGLVSLIVGARYMPKLQHQDLQTSAQQIARERGLDTDSKRKVYLPVIRAYRVGPELVAWADGKNLRELGIYRQTGCYIERIRRNGILANPDGDAVLQMGDDIALVGYPDAHARLDPSFRNGKEVFDRDLLDMRIVTEEIVVKNHNAVGRRLAQLKLTDHGCFLNRVIRSQIEMPIDDNVVLNKGDVLQVSGDARRVKTVADRIGFISIHSQVTDLLAFCAFFIVGLMIGMITFQFSSFSFGIGNAAGLLFAGIMLGFLRANHPTFGYIPQGALNMVKEFGLMVFMAGVGLSAGAGINNGLGAVGGQMLAAGLIVSLVPVVICFLFGAYVLRMNRAMLFGAMMGARTCAPAMEIISDTARSNIPALGYAGTYAIANVLLTLAGTLIVIIWPGLQ</sequence>
<organism>
    <name type="scientific">Klebsiella pneumoniae subsp. pneumoniae (strain ATCC 700721 / MGH 78578)</name>
    <dbReference type="NCBI Taxonomy" id="272620"/>
    <lineage>
        <taxon>Bacteria</taxon>
        <taxon>Pseudomonadati</taxon>
        <taxon>Pseudomonadota</taxon>
        <taxon>Gammaproteobacteria</taxon>
        <taxon>Enterobacterales</taxon>
        <taxon>Enterobacteriaceae</taxon>
        <taxon>Klebsiella/Raoultella group</taxon>
        <taxon>Klebsiella</taxon>
        <taxon>Klebsiella pneumoniae complex</taxon>
    </lineage>
</organism>
<reference key="1">
    <citation type="submission" date="2006-09" db="EMBL/GenBank/DDBJ databases">
        <authorList>
            <consortium name="The Klebsiella pneumonia Genome Sequencing Project"/>
            <person name="McClelland M."/>
            <person name="Sanderson E.K."/>
            <person name="Spieth J."/>
            <person name="Clifton W.S."/>
            <person name="Latreille P."/>
            <person name="Sabo A."/>
            <person name="Pepin K."/>
            <person name="Bhonagiri V."/>
            <person name="Porwollik S."/>
            <person name="Ali J."/>
            <person name="Wilson R.K."/>
        </authorList>
    </citation>
    <scope>NUCLEOTIDE SEQUENCE [LARGE SCALE GENOMIC DNA]</scope>
    <source>
        <strain>ATCC 700721 / MGH 78578</strain>
    </source>
</reference>
<feature type="chain" id="PRO_0000329146" description="Putative transport protein KPN78578_08530">
    <location>
        <begin position="1"/>
        <end position="561"/>
    </location>
</feature>
<feature type="transmembrane region" description="Helical" evidence="1">
    <location>
        <begin position="8"/>
        <end position="28"/>
    </location>
</feature>
<feature type="transmembrane region" description="Helical" evidence="1">
    <location>
        <begin position="37"/>
        <end position="57"/>
    </location>
</feature>
<feature type="transmembrane region" description="Helical" evidence="1">
    <location>
        <begin position="66"/>
        <end position="86"/>
    </location>
</feature>
<feature type="transmembrane region" description="Helical" evidence="1">
    <location>
        <begin position="94"/>
        <end position="114"/>
    </location>
</feature>
<feature type="transmembrane region" description="Helical" evidence="1">
    <location>
        <begin position="158"/>
        <end position="178"/>
    </location>
</feature>
<feature type="transmembrane region" description="Helical" evidence="1">
    <location>
        <begin position="383"/>
        <end position="403"/>
    </location>
</feature>
<feature type="transmembrane region" description="Helical" evidence="1">
    <location>
        <begin position="406"/>
        <end position="426"/>
    </location>
</feature>
<feature type="transmembrane region" description="Helical" evidence="1">
    <location>
        <begin position="447"/>
        <end position="467"/>
    </location>
</feature>
<feature type="transmembrane region" description="Helical" evidence="1">
    <location>
        <begin position="478"/>
        <end position="498"/>
    </location>
</feature>
<feature type="transmembrane region" description="Helical" evidence="1">
    <location>
        <begin position="540"/>
        <end position="560"/>
    </location>
</feature>
<feature type="domain" description="RCK C-terminal 1" evidence="1">
    <location>
        <begin position="202"/>
        <end position="288"/>
    </location>
</feature>
<feature type="domain" description="RCK C-terminal 2" evidence="1">
    <location>
        <begin position="292"/>
        <end position="373"/>
    </location>
</feature>
<dbReference type="EMBL" id="CP000647">
    <property type="protein sequence ID" value="ABR76314.1"/>
    <property type="status" value="ALT_INIT"/>
    <property type="molecule type" value="Genomic_DNA"/>
</dbReference>
<dbReference type="RefSeq" id="WP_004179131.1">
    <property type="nucleotide sequence ID" value="NC_009648.1"/>
</dbReference>
<dbReference type="SMR" id="A6T6U3"/>
<dbReference type="STRING" id="272620.KPN_00878"/>
<dbReference type="PaxDb" id="272620-KPN_00878"/>
<dbReference type="EnsemblBacteria" id="ABR76314">
    <property type="protein sequence ID" value="ABR76314"/>
    <property type="gene ID" value="KPN_00878"/>
</dbReference>
<dbReference type="KEGG" id="kpn:KPN_00878"/>
<dbReference type="HOGENOM" id="CLU_035023_2_1_6"/>
<dbReference type="Proteomes" id="UP000000265">
    <property type="component" value="Chromosome"/>
</dbReference>
<dbReference type="GO" id="GO:0005886">
    <property type="term" value="C:plasma membrane"/>
    <property type="evidence" value="ECO:0007669"/>
    <property type="project" value="UniProtKB-SubCell"/>
</dbReference>
<dbReference type="GO" id="GO:0008324">
    <property type="term" value="F:monoatomic cation transmembrane transporter activity"/>
    <property type="evidence" value="ECO:0007669"/>
    <property type="project" value="InterPro"/>
</dbReference>
<dbReference type="GO" id="GO:0006813">
    <property type="term" value="P:potassium ion transport"/>
    <property type="evidence" value="ECO:0007669"/>
    <property type="project" value="InterPro"/>
</dbReference>
<dbReference type="FunFam" id="3.30.70.1450:FF:000003">
    <property type="entry name" value="Putative transport protein YbjL"/>
    <property type="match status" value="1"/>
</dbReference>
<dbReference type="Gene3D" id="3.30.70.1450">
    <property type="entry name" value="Regulator of K+ conductance, C-terminal domain"/>
    <property type="match status" value="2"/>
</dbReference>
<dbReference type="HAMAP" id="MF_01015">
    <property type="entry name" value="YbjL"/>
    <property type="match status" value="1"/>
</dbReference>
<dbReference type="InterPro" id="IPR050144">
    <property type="entry name" value="AAE_transporter"/>
</dbReference>
<dbReference type="InterPro" id="IPR006037">
    <property type="entry name" value="RCK_C"/>
</dbReference>
<dbReference type="InterPro" id="IPR036721">
    <property type="entry name" value="RCK_C_sf"/>
</dbReference>
<dbReference type="InterPro" id="IPR023017">
    <property type="entry name" value="Transp_YbjL_put"/>
</dbReference>
<dbReference type="InterPro" id="IPR006512">
    <property type="entry name" value="YidE_YbjL"/>
</dbReference>
<dbReference type="NCBIfam" id="NF003440">
    <property type="entry name" value="PRK04972.1"/>
    <property type="match status" value="1"/>
</dbReference>
<dbReference type="NCBIfam" id="TIGR01625">
    <property type="entry name" value="YidE_YbjL_dupl"/>
    <property type="match status" value="2"/>
</dbReference>
<dbReference type="PANTHER" id="PTHR30445">
    <property type="entry name" value="K(+)_H(+) ANTIPORTER SUBUNIT KHTT"/>
    <property type="match status" value="1"/>
</dbReference>
<dbReference type="PANTHER" id="PTHR30445:SF10">
    <property type="entry name" value="TRANSPORT PROTEIN YBJL-RELATED"/>
    <property type="match status" value="1"/>
</dbReference>
<dbReference type="Pfam" id="PF06826">
    <property type="entry name" value="Asp-Al_Ex"/>
    <property type="match status" value="2"/>
</dbReference>
<dbReference type="Pfam" id="PF02080">
    <property type="entry name" value="TrkA_C"/>
    <property type="match status" value="2"/>
</dbReference>
<dbReference type="SUPFAM" id="SSF116726">
    <property type="entry name" value="TrkA C-terminal domain-like"/>
    <property type="match status" value="2"/>
</dbReference>
<dbReference type="PROSITE" id="PS51202">
    <property type="entry name" value="RCK_C"/>
    <property type="match status" value="2"/>
</dbReference>
<proteinExistence type="inferred from homology"/>